<comment type="function">
    <text evidence="5">Alpha-L-arabinofuranosidase specific for the cleavage of alpha-1,3-linkage (PubMed:25432346). Shows high activity against 4-nitrophenyl alpha-L-arabinofuranoside, debranched arabinan, and sugar beet arabinan (PubMed:25432346).</text>
</comment>
<comment type="catalytic activity">
    <reaction evidence="5">
        <text>Hydrolysis of terminal non-reducing alpha-L-arabinofuranoside residues in alpha-L-arabinosides.</text>
        <dbReference type="EC" id="3.2.1.55"/>
    </reaction>
</comment>
<comment type="activity regulation">
    <text evidence="5">Activity is significantly inhibited by SDS and partially inhibited by Ag(+), Fe(3+) and beta-mercaptoethanol.</text>
</comment>
<comment type="biophysicochemical properties">
    <kinetics>
        <KM evidence="6">1.55 mM for pNPAf</KM>
        <Vmax evidence="5">103.0 umol/min/mg enzyme towards pNPAf</Vmax>
    </kinetics>
    <phDependence>
        <text evidence="5">Optimum pH is 5.0.</text>
    </phDependence>
    <temperatureDependence>
        <text evidence="5">Optimum temperature is 50 degrees Celsius.</text>
    </temperatureDependence>
</comment>
<comment type="subcellular location">
    <subcellularLocation>
        <location evidence="2">Secreted</location>
    </subcellularLocation>
</comment>
<comment type="biotechnology">
    <text evidence="5">Sequential addition of Abf43 followed by Xyn11A increases the degradation efficiency of birchwood and beechwood xylans but not wheat arabinoxylan. The synergy degree is high up to 1.21-fold.</text>
</comment>
<comment type="similarity">
    <text evidence="7">Belongs to the glycosyl hydrolase 43 family.</text>
</comment>
<keyword id="KW-0325">Glycoprotein</keyword>
<keyword id="KW-0326">Glycosidase</keyword>
<keyword id="KW-0378">Hydrolase</keyword>
<keyword id="KW-0964">Secreted</keyword>
<keyword id="KW-0732">Signal</keyword>
<sequence length="481" mass="52377">MRFSVFTAAIAAAFSACCATASPAVNYVNSLILQRADPHIVKHTDGWYYFTATVPEYDRIVLRRAQTIQGLQSAPETVIWRRKAFGVGSGQVWAPELHYIDGRWYIYVALGVSGQWRIRAFVLEGVGANPLTASWTEKGIIQTNWDTFSLDATTFVANGTRYLVWAQQDPSRNGENSSLFIAPLQNPWTIRGPAVAISHPDLSWERIGYKVNEGPAVIQRNGRIFLTYSASATDHNYCMGLLTARADANLMNPASWVKSQQPIFVSNAATNQWGPGHNQFTVSEDGLSDILVYHDRGYRDINGDPLNDPNRRTRVQKLYWRDDGTPDFGIPVPDGPTPVRLRVAANGASSNGAYVRFYTTTGSGNLTGTAALPDTQFKLVSPGLSGGDSVSLESTSNPGTYVRRVSGSTAVQFERGTALNTAALRASASFRRVPGLSDSGGAVSFESVESPGQYLRLDPNGRLSVASVAEGTQGRSTFYLE</sequence>
<accession>A0A0F6NRE2</accession>
<reference key="1">
    <citation type="journal article" date="2015" name="Appl. Biochem. Biotechnol.">
        <title>A new GH43 alpha-arabinofuranosidase from Humicola insolens Y1: biochemical characterization and synergistic action with a xylanase on xylan degradation.</title>
        <authorList>
            <person name="Yang X."/>
            <person name="Shi P."/>
            <person name="Ma R."/>
            <person name="Luo H."/>
            <person name="Huang H."/>
            <person name="Yang P."/>
            <person name="Yao B."/>
        </authorList>
    </citation>
    <scope>NUCLEOTIDE SEQUENCE [MRNA]</scope>
    <scope>FUNCTION</scope>
    <scope>CATALYTIC ACTIVITY</scope>
    <scope>BIOPHYSICOCHEMICAL PROPERTIES</scope>
    <scope>SUBSTRATE SPECIFICITY</scope>
    <scope>ACTIVITY REGULATION</scope>
    <scope>BIOTECHNOLOGY</scope>
    <source>
        <strain>Y1</strain>
    </source>
</reference>
<dbReference type="EC" id="3.2.1.55" evidence="5"/>
<dbReference type="EMBL" id="KJ730025">
    <property type="protein sequence ID" value="AIM56896.1"/>
    <property type="molecule type" value="mRNA"/>
</dbReference>
<dbReference type="GO" id="GO:0005576">
    <property type="term" value="C:extracellular region"/>
    <property type="evidence" value="ECO:0007669"/>
    <property type="project" value="UniProtKB-SubCell"/>
</dbReference>
<dbReference type="GO" id="GO:0046556">
    <property type="term" value="F:alpha-L-arabinofuranosidase activity"/>
    <property type="evidence" value="ECO:0007669"/>
    <property type="project" value="UniProtKB-EC"/>
</dbReference>
<dbReference type="GO" id="GO:0046373">
    <property type="term" value="P:L-arabinose metabolic process"/>
    <property type="evidence" value="ECO:0007669"/>
    <property type="project" value="InterPro"/>
</dbReference>
<dbReference type="CDD" id="cd23265">
    <property type="entry name" value="beta-trefoil_ABD_ABFB-like"/>
    <property type="match status" value="1"/>
</dbReference>
<dbReference type="CDD" id="cd18817">
    <property type="entry name" value="GH43f_LbAraf43-like"/>
    <property type="match status" value="1"/>
</dbReference>
<dbReference type="Gene3D" id="2.80.10.50">
    <property type="match status" value="1"/>
</dbReference>
<dbReference type="Gene3D" id="2.115.10.20">
    <property type="entry name" value="Glycosyl hydrolase domain, family 43"/>
    <property type="match status" value="1"/>
</dbReference>
<dbReference type="InterPro" id="IPR007934">
    <property type="entry name" value="AbfB_ABD"/>
</dbReference>
<dbReference type="InterPro" id="IPR036195">
    <property type="entry name" value="AbfB_ABD_sf"/>
</dbReference>
<dbReference type="InterPro" id="IPR006710">
    <property type="entry name" value="Glyco_hydro_43"/>
</dbReference>
<dbReference type="InterPro" id="IPR023296">
    <property type="entry name" value="Glyco_hydro_beta-prop_sf"/>
</dbReference>
<dbReference type="PANTHER" id="PTHR43817">
    <property type="entry name" value="GLYCOSYL HYDROLASE"/>
    <property type="match status" value="1"/>
</dbReference>
<dbReference type="PANTHER" id="PTHR43817:SF1">
    <property type="entry name" value="HYDROLASE, FAMILY 43, PUTATIVE (AFU_ORTHOLOGUE AFUA_3G01660)-RELATED"/>
    <property type="match status" value="1"/>
</dbReference>
<dbReference type="Pfam" id="PF05270">
    <property type="entry name" value="AbfB"/>
    <property type="match status" value="1"/>
</dbReference>
<dbReference type="Pfam" id="PF04616">
    <property type="entry name" value="Glyco_hydro_43"/>
    <property type="match status" value="1"/>
</dbReference>
<dbReference type="SUPFAM" id="SSF110221">
    <property type="entry name" value="AbfB domain"/>
    <property type="match status" value="1"/>
</dbReference>
<dbReference type="SUPFAM" id="SSF75005">
    <property type="entry name" value="Arabinanase/levansucrase/invertase"/>
    <property type="match status" value="1"/>
</dbReference>
<dbReference type="PROSITE" id="PS51257">
    <property type="entry name" value="PROKAR_LIPOPROTEIN"/>
    <property type="match status" value="1"/>
</dbReference>
<name>ABF43_HUMIN</name>
<evidence type="ECO:0000250" key="1">
    <source>
        <dbReference type="UniProtKB" id="Q45071"/>
    </source>
</evidence>
<evidence type="ECO:0000250" key="2">
    <source>
        <dbReference type="UniProtKB" id="V9TNS0"/>
    </source>
</evidence>
<evidence type="ECO:0000255" key="3"/>
<evidence type="ECO:0000255" key="4">
    <source>
        <dbReference type="PROSITE-ProRule" id="PRU00498"/>
    </source>
</evidence>
<evidence type="ECO:0000269" key="5">
    <source>
    </source>
</evidence>
<evidence type="ECO:0000303" key="6">
    <source>
    </source>
</evidence>
<evidence type="ECO:0000305" key="7"/>
<organism>
    <name type="scientific">Humicola insolens</name>
    <name type="common">Soft-rot fungus</name>
    <dbReference type="NCBI Taxonomy" id="85995"/>
    <lineage>
        <taxon>Eukaryota</taxon>
        <taxon>Fungi</taxon>
        <taxon>Dikarya</taxon>
        <taxon>Ascomycota</taxon>
        <taxon>Pezizomycotina</taxon>
        <taxon>Sordariomycetes</taxon>
        <taxon>Sordariomycetidae</taxon>
        <taxon>Sordariales</taxon>
        <taxon>Chaetomiaceae</taxon>
        <taxon>Mycothermus</taxon>
    </lineage>
</organism>
<feature type="signal peptide" evidence="3">
    <location>
        <begin position="1"/>
        <end position="19"/>
    </location>
</feature>
<feature type="chain" id="PRO_5002508500" description="Alpha-L-arabinofuranosidase 43">
    <location>
        <begin position="20"/>
        <end position="481"/>
    </location>
</feature>
<feature type="site" description="Important for catalytic activity, responsible for pKa modulation of the active site Glu and correct orientation of both the proton donor and substrate" evidence="1">
    <location>
        <position position="151"/>
    </location>
</feature>
<feature type="glycosylation site" description="N-linked (GlcNAc...) asparagine" evidence="4">
    <location>
        <position position="158"/>
    </location>
</feature>
<feature type="glycosylation site" description="N-linked (GlcNAc...) asparagine" evidence="4">
    <location>
        <position position="176"/>
    </location>
</feature>
<feature type="glycosylation site" description="N-linked (GlcNAc...) asparagine" evidence="4">
    <location>
        <position position="365"/>
    </location>
</feature>
<proteinExistence type="evidence at protein level"/>
<gene>
    <name evidence="6" type="primary">Abf43</name>
</gene>
<protein>
    <recommendedName>
        <fullName evidence="6">Alpha-L-arabinofuranosidase 43</fullName>
        <ecNumber evidence="5">3.2.1.55</ecNumber>
    </recommendedName>
</protein>